<comment type="function">
    <text evidence="1">Binds 16S rRNA, required for the assembly of 30S particles and may also be responsible for determining the conformation of the 16S rRNA at the A site.</text>
</comment>
<comment type="cofactor">
    <cofactor evidence="1">
        <name>Zn(2+)</name>
        <dbReference type="ChEBI" id="CHEBI:29105"/>
    </cofactor>
    <text evidence="1">Binds 1 zinc ion per subunit.</text>
</comment>
<comment type="subunit">
    <text evidence="1">Part of the 30S ribosomal subunit. Contacts proteins S3 and S10.</text>
</comment>
<comment type="similarity">
    <text evidence="1">Belongs to the universal ribosomal protein uS14 family. Zinc-binding uS14 subfamily.</text>
</comment>
<gene>
    <name evidence="1" type="primary">rpsZ</name>
    <name evidence="1" type="synonym">rpsN1</name>
    <name type="ordered locus">SE_1810</name>
</gene>
<sequence length="61" mass="7284">MAKTSMVAKQQKKQKFAVREYTRCERCGRPHSVYRKFKLCRICFRELAYKGQIPGVRKASW</sequence>
<feature type="chain" id="PRO_0000269137" description="Small ribosomal subunit protein uS14B">
    <location>
        <begin position="1"/>
        <end position="61"/>
    </location>
</feature>
<feature type="binding site" evidence="1">
    <location>
        <position position="24"/>
    </location>
    <ligand>
        <name>Zn(2+)</name>
        <dbReference type="ChEBI" id="CHEBI:29105"/>
    </ligand>
</feature>
<feature type="binding site" evidence="1">
    <location>
        <position position="27"/>
    </location>
    <ligand>
        <name>Zn(2+)</name>
        <dbReference type="ChEBI" id="CHEBI:29105"/>
    </ligand>
</feature>
<feature type="binding site" evidence="1">
    <location>
        <position position="40"/>
    </location>
    <ligand>
        <name>Zn(2+)</name>
        <dbReference type="ChEBI" id="CHEBI:29105"/>
    </ligand>
</feature>
<feature type="binding site" evidence="1">
    <location>
        <position position="43"/>
    </location>
    <ligand>
        <name>Zn(2+)</name>
        <dbReference type="ChEBI" id="CHEBI:29105"/>
    </ligand>
</feature>
<dbReference type="EMBL" id="AE015929">
    <property type="protein sequence ID" value="AAO05451.1"/>
    <property type="molecule type" value="Genomic_DNA"/>
</dbReference>
<dbReference type="RefSeq" id="NP_765365.1">
    <property type="nucleotide sequence ID" value="NC_004461.1"/>
</dbReference>
<dbReference type="RefSeq" id="WP_001829713.1">
    <property type="nucleotide sequence ID" value="NZ_WBME01000007.1"/>
</dbReference>
<dbReference type="SMR" id="Q8CRH3"/>
<dbReference type="KEGG" id="sep:SE_1810"/>
<dbReference type="PATRIC" id="fig|176280.10.peg.1767"/>
<dbReference type="eggNOG" id="COG0199">
    <property type="taxonomic scope" value="Bacteria"/>
</dbReference>
<dbReference type="HOGENOM" id="CLU_139869_3_0_9"/>
<dbReference type="OrthoDB" id="9810484at2"/>
<dbReference type="PRO" id="PR:Q8CRH3"/>
<dbReference type="Proteomes" id="UP000001411">
    <property type="component" value="Chromosome"/>
</dbReference>
<dbReference type="GO" id="GO:0015935">
    <property type="term" value="C:small ribosomal subunit"/>
    <property type="evidence" value="ECO:0007669"/>
    <property type="project" value="TreeGrafter"/>
</dbReference>
<dbReference type="GO" id="GO:0019843">
    <property type="term" value="F:rRNA binding"/>
    <property type="evidence" value="ECO:0007669"/>
    <property type="project" value="UniProtKB-UniRule"/>
</dbReference>
<dbReference type="GO" id="GO:0003735">
    <property type="term" value="F:structural constituent of ribosome"/>
    <property type="evidence" value="ECO:0007669"/>
    <property type="project" value="InterPro"/>
</dbReference>
<dbReference type="GO" id="GO:0008270">
    <property type="term" value="F:zinc ion binding"/>
    <property type="evidence" value="ECO:0007669"/>
    <property type="project" value="UniProtKB-UniRule"/>
</dbReference>
<dbReference type="GO" id="GO:0006412">
    <property type="term" value="P:translation"/>
    <property type="evidence" value="ECO:0007669"/>
    <property type="project" value="UniProtKB-UniRule"/>
</dbReference>
<dbReference type="FunFam" id="4.10.830.10:FF:000001">
    <property type="entry name" value="30S ribosomal protein S14 type Z"/>
    <property type="match status" value="1"/>
</dbReference>
<dbReference type="Gene3D" id="4.10.830.10">
    <property type="entry name" value="30s Ribosomal Protein S14, Chain N"/>
    <property type="match status" value="1"/>
</dbReference>
<dbReference type="HAMAP" id="MF_01364_B">
    <property type="entry name" value="Ribosomal_uS14_2_B"/>
    <property type="match status" value="1"/>
</dbReference>
<dbReference type="InterPro" id="IPR001209">
    <property type="entry name" value="Ribosomal_uS14"/>
</dbReference>
<dbReference type="InterPro" id="IPR023053">
    <property type="entry name" value="Ribosomal_uS14_bact"/>
</dbReference>
<dbReference type="InterPro" id="IPR018271">
    <property type="entry name" value="Ribosomal_uS14_CS"/>
</dbReference>
<dbReference type="InterPro" id="IPR043140">
    <property type="entry name" value="Ribosomal_uS14_sf"/>
</dbReference>
<dbReference type="NCBIfam" id="NF005974">
    <property type="entry name" value="PRK08061.1"/>
    <property type="match status" value="1"/>
</dbReference>
<dbReference type="PANTHER" id="PTHR19836">
    <property type="entry name" value="30S RIBOSOMAL PROTEIN S14"/>
    <property type="match status" value="1"/>
</dbReference>
<dbReference type="PANTHER" id="PTHR19836:SF26">
    <property type="entry name" value="SMALL RIBOSOMAL SUBUNIT PROTEIN US14B"/>
    <property type="match status" value="1"/>
</dbReference>
<dbReference type="Pfam" id="PF00253">
    <property type="entry name" value="Ribosomal_S14"/>
    <property type="match status" value="1"/>
</dbReference>
<dbReference type="SUPFAM" id="SSF57716">
    <property type="entry name" value="Glucocorticoid receptor-like (DNA-binding domain)"/>
    <property type="match status" value="1"/>
</dbReference>
<dbReference type="PROSITE" id="PS00527">
    <property type="entry name" value="RIBOSOMAL_S14"/>
    <property type="match status" value="1"/>
</dbReference>
<evidence type="ECO:0000255" key="1">
    <source>
        <dbReference type="HAMAP-Rule" id="MF_01364"/>
    </source>
</evidence>
<evidence type="ECO:0000305" key="2"/>
<protein>
    <recommendedName>
        <fullName evidence="1">Small ribosomal subunit protein uS14B</fullName>
    </recommendedName>
    <alternativeName>
        <fullName evidence="2">30S ribosomal protein S14 type Z</fullName>
    </alternativeName>
</protein>
<reference key="1">
    <citation type="journal article" date="2003" name="Mol. Microbiol.">
        <title>Genome-based analysis of virulence genes in a non-biofilm-forming Staphylococcus epidermidis strain (ATCC 12228).</title>
        <authorList>
            <person name="Zhang Y.-Q."/>
            <person name="Ren S.-X."/>
            <person name="Li H.-L."/>
            <person name="Wang Y.-X."/>
            <person name="Fu G."/>
            <person name="Yang J."/>
            <person name="Qin Z.-Q."/>
            <person name="Miao Y.-G."/>
            <person name="Wang W.-Y."/>
            <person name="Chen R.-S."/>
            <person name="Shen Y."/>
            <person name="Chen Z."/>
            <person name="Yuan Z.-H."/>
            <person name="Zhao G.-P."/>
            <person name="Qu D."/>
            <person name="Danchin A."/>
            <person name="Wen Y.-M."/>
        </authorList>
    </citation>
    <scope>NUCLEOTIDE SEQUENCE [LARGE SCALE GENOMIC DNA]</scope>
    <source>
        <strain>ATCC 12228 / FDA PCI 1200</strain>
    </source>
</reference>
<accession>Q8CRH3</accession>
<name>RS14Z_STAES</name>
<keyword id="KW-0479">Metal-binding</keyword>
<keyword id="KW-0687">Ribonucleoprotein</keyword>
<keyword id="KW-0689">Ribosomal protein</keyword>
<keyword id="KW-0694">RNA-binding</keyword>
<keyword id="KW-0699">rRNA-binding</keyword>
<keyword id="KW-0862">Zinc</keyword>
<organism>
    <name type="scientific">Staphylococcus epidermidis (strain ATCC 12228 / FDA PCI 1200)</name>
    <dbReference type="NCBI Taxonomy" id="176280"/>
    <lineage>
        <taxon>Bacteria</taxon>
        <taxon>Bacillati</taxon>
        <taxon>Bacillota</taxon>
        <taxon>Bacilli</taxon>
        <taxon>Bacillales</taxon>
        <taxon>Staphylococcaceae</taxon>
        <taxon>Staphylococcus</taxon>
    </lineage>
</organism>
<proteinExistence type="inferred from homology"/>